<name>MNHD1_STAAU</name>
<protein>
    <recommendedName>
        <fullName>Na(+)/H(+) antiporter subunit D1</fullName>
    </recommendedName>
    <alternativeName>
        <fullName>Mnh complex subunit D1</fullName>
    </alternativeName>
    <alternativeName>
        <fullName>Mrp complex subunit D1</fullName>
    </alternativeName>
</protein>
<dbReference type="EMBL" id="AB015981">
    <property type="protein sequence ID" value="BAA35098.1"/>
    <property type="molecule type" value="Genomic_DNA"/>
</dbReference>
<dbReference type="EMBL" id="DQ659238">
    <property type="protein sequence ID" value="ABG67113.1"/>
    <property type="molecule type" value="Genomic_DNA"/>
</dbReference>
<dbReference type="PIR" id="F89861">
    <property type="entry name" value="F89861"/>
</dbReference>
<dbReference type="RefSeq" id="WP_000573077.1">
    <property type="nucleotide sequence ID" value="NZ_WYDB01000003.1"/>
</dbReference>
<dbReference type="SMR" id="P60686"/>
<dbReference type="TCDB" id="2.A.63.1.3">
    <property type="family name" value="the monovalent cation (k(+) or na(+)):proton antiporter-3 (cpa3) family"/>
</dbReference>
<dbReference type="OMA" id="ITRWGNQ"/>
<dbReference type="GO" id="GO:0005886">
    <property type="term" value="C:plasma membrane"/>
    <property type="evidence" value="ECO:0007669"/>
    <property type="project" value="UniProtKB-SubCell"/>
</dbReference>
<dbReference type="GO" id="GO:0008137">
    <property type="term" value="F:NADH dehydrogenase (ubiquinone) activity"/>
    <property type="evidence" value="ECO:0007669"/>
    <property type="project" value="InterPro"/>
</dbReference>
<dbReference type="GO" id="GO:0015386">
    <property type="term" value="F:potassium:proton antiporter activity"/>
    <property type="evidence" value="ECO:0007669"/>
    <property type="project" value="InterPro"/>
</dbReference>
<dbReference type="GO" id="GO:0042773">
    <property type="term" value="P:ATP synthesis coupled electron transport"/>
    <property type="evidence" value="ECO:0007669"/>
    <property type="project" value="InterPro"/>
</dbReference>
<dbReference type="GO" id="GO:0006814">
    <property type="term" value="P:sodium ion transport"/>
    <property type="evidence" value="ECO:0007669"/>
    <property type="project" value="UniProtKB-KW"/>
</dbReference>
<dbReference type="InterPro" id="IPR050586">
    <property type="entry name" value="CPA3_Na-H_Antiporter_D"/>
</dbReference>
<dbReference type="InterPro" id="IPR004775">
    <property type="entry name" value="MnhD1"/>
</dbReference>
<dbReference type="InterPro" id="IPR003918">
    <property type="entry name" value="NADH_UbQ_OxRdtase"/>
</dbReference>
<dbReference type="InterPro" id="IPR001750">
    <property type="entry name" value="ND/Mrp_TM"/>
</dbReference>
<dbReference type="NCBIfam" id="TIGR00944">
    <property type="entry name" value="2a6301s04"/>
    <property type="match status" value="1"/>
</dbReference>
<dbReference type="NCBIfam" id="NF005818">
    <property type="entry name" value="PRK07691.1"/>
    <property type="match status" value="1"/>
</dbReference>
<dbReference type="PANTHER" id="PTHR42703:SF1">
    <property type="entry name" value="NA(+)_H(+) ANTIPORTER SUBUNIT D1"/>
    <property type="match status" value="1"/>
</dbReference>
<dbReference type="PANTHER" id="PTHR42703">
    <property type="entry name" value="NADH DEHYDROGENASE"/>
    <property type="match status" value="1"/>
</dbReference>
<dbReference type="Pfam" id="PF00361">
    <property type="entry name" value="Proton_antipo_M"/>
    <property type="match status" value="1"/>
</dbReference>
<dbReference type="PRINTS" id="PR01437">
    <property type="entry name" value="NUOXDRDTASE4"/>
</dbReference>
<reference key="1">
    <citation type="journal article" date="1998" name="J. Bacteriol.">
        <title>A putative multisubunit Na+/H+ antiporter from Staphylococcus aureus.</title>
        <authorList>
            <person name="Hiramatsu T."/>
            <person name="Kodama K."/>
            <person name="Kuroda T."/>
            <person name="Mizushima T."/>
            <person name="Tsuchiya T."/>
        </authorList>
    </citation>
    <scope>NUCLEOTIDE SEQUENCE [GENOMIC DNA]</scope>
    <scope>CHARACTERIZATION OF ANTIPORTER ACTIVITY</scope>
    <source>
        <strain>ATCC 21027 / 209-P</strain>
    </source>
</reference>
<reference key="2">
    <citation type="journal article" date="2007" name="J. Bacteriol.">
        <title>Catalytic properties of Staphylococcus aureus and Bacillus members of the secondary cation/proton antiporter-3 (Mrp) family are revealed by an optimized assay in an Escherichia coli host.</title>
        <authorList>
            <person name="Swartz T.H."/>
            <person name="Ito M."/>
            <person name="Ohira T."/>
            <person name="Natsui S."/>
            <person name="Hicks D.B."/>
            <person name="Krulwich T.A."/>
        </authorList>
    </citation>
    <scope>NUCLEOTIDE SEQUENCE [GENOMIC DNA]</scope>
    <scope>CHARACTERIZATION</scope>
    <scope>PROBABLE ELECTROGENIC ANTIPORTER ACTIVITY</scope>
    <source>
        <strain>RF4220</strain>
    </source>
</reference>
<gene>
    <name type="primary">mnhD1</name>
    <name type="synonym">mrpD1</name>
</gene>
<evidence type="ECO:0000255" key="1"/>
<evidence type="ECO:0000305" key="2"/>
<accession>P60686</accession>
<accession>Q0Q2K4</accession>
<accession>Q9ZNG3</accession>
<organism>
    <name type="scientific">Staphylococcus aureus</name>
    <dbReference type="NCBI Taxonomy" id="1280"/>
    <lineage>
        <taxon>Bacteria</taxon>
        <taxon>Bacillati</taxon>
        <taxon>Bacillota</taxon>
        <taxon>Bacilli</taxon>
        <taxon>Bacillales</taxon>
        <taxon>Staphylococcaceae</taxon>
        <taxon>Staphylococcus</taxon>
    </lineage>
</organism>
<comment type="function">
    <text>Mnh complex is a Na(+)Li(+)/H(+) antiporter involved in Na(+) and/or Li(+) excretion. Na(+)/H(+) antiport consumes a transmembrane electrical potential, and is thus inferred to be electrogenic. Does not transport K(+), Ca(2+) or Mg(2+).</text>
</comment>
<comment type="activity regulation">
    <text>Na(+) extrusion is completely inhibited by the H(+) conductor carbonyl cyanide m-chlorophenylhydrazone (CCCP).</text>
</comment>
<comment type="subunit">
    <text>May form a heterooligomeric complex that consists of seven subunits: mnhA1, mnhB1, mnhC1, mnhD1, mnhE1, mnhF1 and mnhG1.</text>
</comment>
<comment type="subcellular location">
    <subcellularLocation>
        <location evidence="2">Cell membrane</location>
        <topology evidence="2">Multi-pass membrane protein</topology>
    </subcellularLocation>
</comment>
<comment type="similarity">
    <text evidence="2">Belongs to the CPA3 antiporters (TC 2.A.63) subunit D family.</text>
</comment>
<sequence>MIESNMLVLTLVIPVITAILLVFIGKRPIIKRYVALGGTLLTLVAAIINLANVVKHGPIRVELGSWKAPYSIVFVLDIFSALLIITSIIITAIVILYSYQTIGIERERYYYYFSVLFMLIGIIGAFTTGDIFNLFVFFEVFLMSSYFLLVIGSTKIQLQETIKYVLVNVVSSSFFVMGVAILYSVVGTLNLADISNKLANLSAHDSGLVNIVFILFIFVFATKAGVFPMFVWLPSAYYAPPIPIIAFFGALLTKVGVYAIARTLSLFFSDNVSFSHYVILFLALLTIIFGCVGAVAYANIKKIILYNVMIAVGVILVGVAMMTESGMIGAIYYTLHDMLVKLALFLLIGIMIKITGTADLRQFGGLIKRYPVLGWSFFIAALSLAGIPPLSGFYGKFFIVQSTFERGFYLSGVIVLLSSLVVLYSVIRIFLQGFFGQPKGYDLNNKVDVKYLTTIAIVAVVITVLYGLSADYLYPMVKAGAETFYNPSTYVKAVLGGK</sequence>
<proteinExistence type="evidence at protein level"/>
<keyword id="KW-0050">Antiport</keyword>
<keyword id="KW-1003">Cell membrane</keyword>
<keyword id="KW-0375">Hydrogen ion transport</keyword>
<keyword id="KW-0406">Ion transport</keyword>
<keyword id="KW-0472">Membrane</keyword>
<keyword id="KW-0915">Sodium</keyword>
<keyword id="KW-0739">Sodium transport</keyword>
<keyword id="KW-0812">Transmembrane</keyword>
<keyword id="KW-1133">Transmembrane helix</keyword>
<keyword id="KW-0813">Transport</keyword>
<feature type="chain" id="PRO_0000217081" description="Na(+)/H(+) antiporter subunit D1">
    <location>
        <begin position="1"/>
        <end position="498"/>
    </location>
</feature>
<feature type="transmembrane region" description="Helical" evidence="1">
    <location>
        <begin position="6"/>
        <end position="25"/>
    </location>
</feature>
<feature type="transmembrane region" description="Helical" evidence="1">
    <location>
        <begin position="32"/>
        <end position="54"/>
    </location>
</feature>
<feature type="transmembrane region" description="Helical" evidence="1">
    <location>
        <begin position="74"/>
        <end position="96"/>
    </location>
</feature>
<feature type="transmembrane region" description="Helical" evidence="1">
    <location>
        <begin position="109"/>
        <end position="126"/>
    </location>
</feature>
<feature type="transmembrane region" description="Helical" evidence="1">
    <location>
        <begin position="131"/>
        <end position="153"/>
    </location>
</feature>
<feature type="transmembrane region" description="Helical" evidence="1">
    <location>
        <begin position="165"/>
        <end position="187"/>
    </location>
</feature>
<feature type="transmembrane region" description="Helical" evidence="1">
    <location>
        <begin position="211"/>
        <end position="233"/>
    </location>
</feature>
<feature type="transmembrane region" description="Helical" evidence="1">
    <location>
        <begin position="238"/>
        <end position="260"/>
    </location>
</feature>
<feature type="transmembrane region" description="Helical" evidence="1">
    <location>
        <begin position="275"/>
        <end position="297"/>
    </location>
</feature>
<feature type="transmembrane region" description="Helical" evidence="1">
    <location>
        <begin position="304"/>
        <end position="323"/>
    </location>
</feature>
<feature type="transmembrane region" description="Helical" evidence="1">
    <location>
        <begin position="328"/>
        <end position="350"/>
    </location>
</feature>
<feature type="transmembrane region" description="Helical" evidence="1">
    <location>
        <begin position="371"/>
        <end position="393"/>
    </location>
</feature>
<feature type="transmembrane region" description="Helical" evidence="1">
    <location>
        <begin position="408"/>
        <end position="430"/>
    </location>
</feature>
<feature type="transmembrane region" description="Helical" evidence="1">
    <location>
        <begin position="451"/>
        <end position="470"/>
    </location>
</feature>